<sequence length="343" mass="38817">MLTNRQLQILQVIIDDFILSAQPVGSRQISKKQGITFSPATIRNEMADLEELGYLEKTHTSSGRVPSEKGYRFYVDHLLSPQGINSRDIQQIQSIFNDRLVEVEHIIRKSANILSELTSYTSILLGPDVQRHRVKRFSIVPLSSDTAVAIIVTNNGHVENRLFNLPPDFTASDLEKMVNILNDRLIGVSLEELHKSLEAEVLAVLQQHVQSADDFYPRTRNSDNAIIQKAKIFYGGKTNMFNQPEFHDLNKVRMILDLMETTSQVQSLFHPNESGIHIRIGSENKQLEMENCSVITTTYSIGDDQQGAIAIIGPTRMDYKRVVALLDVIRLDLTQAFTKNRSE</sequence>
<evidence type="ECO:0000255" key="1">
    <source>
        <dbReference type="HAMAP-Rule" id="MF_00081"/>
    </source>
</evidence>
<organism>
    <name type="scientific">Lysinibacillus sphaericus</name>
    <name type="common">Bacillus sphaericus</name>
    <dbReference type="NCBI Taxonomy" id="1421"/>
    <lineage>
        <taxon>Bacteria</taxon>
        <taxon>Bacillati</taxon>
        <taxon>Bacillota</taxon>
        <taxon>Bacilli</taxon>
        <taxon>Bacillales</taxon>
        <taxon>Bacillaceae</taxon>
        <taxon>Lysinibacillus</taxon>
    </lineage>
</organism>
<proteinExistence type="inferred from homology"/>
<feature type="chain" id="PRO_0000182447" description="Heat-inducible transcription repressor HrcA">
    <location>
        <begin position="1"/>
        <end position="343"/>
    </location>
</feature>
<reference key="1">
    <citation type="submission" date="1998-09" db="EMBL/GenBank/DDBJ databases">
        <authorList>
            <person name="Ahmad S."/>
            <person name="Selvapandiyan A."/>
            <person name="Gasbarri M."/>
            <person name="Bhatnagar R.K."/>
        </authorList>
    </citation>
    <scope>NUCLEOTIDE SEQUENCE [GENOMIC DNA]</scope>
    <source>
        <strain>ATCC 33203 / 1593</strain>
    </source>
</reference>
<name>HRCA_LYSSH</name>
<keyword id="KW-0678">Repressor</keyword>
<keyword id="KW-0346">Stress response</keyword>
<keyword id="KW-0804">Transcription</keyword>
<keyword id="KW-0805">Transcription regulation</keyword>
<dbReference type="EMBL" id="Y17157">
    <property type="protein sequence ID" value="CAA76661.1"/>
    <property type="molecule type" value="Genomic_DNA"/>
</dbReference>
<dbReference type="SMR" id="O69266"/>
<dbReference type="STRING" id="1421.A2J09_11495"/>
<dbReference type="GO" id="GO:0003677">
    <property type="term" value="F:DNA binding"/>
    <property type="evidence" value="ECO:0007669"/>
    <property type="project" value="InterPro"/>
</dbReference>
<dbReference type="GO" id="GO:0045892">
    <property type="term" value="P:negative regulation of DNA-templated transcription"/>
    <property type="evidence" value="ECO:0007669"/>
    <property type="project" value="UniProtKB-UniRule"/>
</dbReference>
<dbReference type="FunFam" id="1.10.10.10:FF:000049">
    <property type="entry name" value="Heat-inducible transcription repressor HrcA"/>
    <property type="match status" value="1"/>
</dbReference>
<dbReference type="Gene3D" id="3.30.450.40">
    <property type="match status" value="1"/>
</dbReference>
<dbReference type="Gene3D" id="3.30.390.60">
    <property type="entry name" value="Heat-inducible transcription repressor hrca homolog, domain 3"/>
    <property type="match status" value="1"/>
</dbReference>
<dbReference type="Gene3D" id="1.10.10.10">
    <property type="entry name" value="Winged helix-like DNA-binding domain superfamily/Winged helix DNA-binding domain"/>
    <property type="match status" value="1"/>
</dbReference>
<dbReference type="HAMAP" id="MF_00081">
    <property type="entry name" value="HrcA"/>
    <property type="match status" value="1"/>
</dbReference>
<dbReference type="InterPro" id="IPR029016">
    <property type="entry name" value="GAF-like_dom_sf"/>
</dbReference>
<dbReference type="InterPro" id="IPR002571">
    <property type="entry name" value="HrcA"/>
</dbReference>
<dbReference type="InterPro" id="IPR021153">
    <property type="entry name" value="HrcA_C"/>
</dbReference>
<dbReference type="InterPro" id="IPR036388">
    <property type="entry name" value="WH-like_DNA-bd_sf"/>
</dbReference>
<dbReference type="InterPro" id="IPR036390">
    <property type="entry name" value="WH_DNA-bd_sf"/>
</dbReference>
<dbReference type="InterPro" id="IPR023120">
    <property type="entry name" value="WHTH_transcript_rep_HrcA_IDD"/>
</dbReference>
<dbReference type="NCBIfam" id="TIGR00331">
    <property type="entry name" value="hrcA"/>
    <property type="match status" value="1"/>
</dbReference>
<dbReference type="PANTHER" id="PTHR34824">
    <property type="entry name" value="HEAT-INDUCIBLE TRANSCRIPTION REPRESSOR HRCA"/>
    <property type="match status" value="1"/>
</dbReference>
<dbReference type="PANTHER" id="PTHR34824:SF1">
    <property type="entry name" value="HEAT-INDUCIBLE TRANSCRIPTION REPRESSOR HRCA"/>
    <property type="match status" value="1"/>
</dbReference>
<dbReference type="Pfam" id="PF01628">
    <property type="entry name" value="HrcA"/>
    <property type="match status" value="1"/>
</dbReference>
<dbReference type="PIRSF" id="PIRSF005485">
    <property type="entry name" value="HrcA"/>
    <property type="match status" value="1"/>
</dbReference>
<dbReference type="SUPFAM" id="SSF55781">
    <property type="entry name" value="GAF domain-like"/>
    <property type="match status" value="1"/>
</dbReference>
<dbReference type="SUPFAM" id="SSF46785">
    <property type="entry name" value="Winged helix' DNA-binding domain"/>
    <property type="match status" value="1"/>
</dbReference>
<comment type="function">
    <text evidence="1">Negative regulator of class I heat shock genes (grpE-dnaK-dnaJ and groELS operons). Prevents heat-shock induction of these operons.</text>
</comment>
<comment type="similarity">
    <text evidence="1">Belongs to the HrcA family.</text>
</comment>
<protein>
    <recommendedName>
        <fullName evidence="1">Heat-inducible transcription repressor HrcA</fullName>
    </recommendedName>
</protein>
<gene>
    <name evidence="1" type="primary">hrcA</name>
</gene>
<accession>O69266</accession>